<comment type="function">
    <text evidence="1">Exhibits a very high intrinsic GTPase hydrolysis rate. Involved in the addition of a carboxymethylaminomethyl (cmnm) group at the wobble position (U34) of certain tRNAs, forming tRNA-cmnm(5)s(2)U34.</text>
</comment>
<comment type="cofactor">
    <cofactor evidence="1">
        <name>K(+)</name>
        <dbReference type="ChEBI" id="CHEBI:29103"/>
    </cofactor>
    <text evidence="1">Binds 1 potassium ion per subunit.</text>
</comment>
<comment type="subunit">
    <text evidence="1">Homodimer. Heterotetramer of two MnmE and two MnmG subunits.</text>
</comment>
<comment type="subcellular location">
    <subcellularLocation>
        <location evidence="1">Cytoplasm</location>
    </subcellularLocation>
</comment>
<comment type="similarity">
    <text evidence="1">Belongs to the TRAFAC class TrmE-Era-EngA-EngB-Septin-like GTPase superfamily. TrmE GTPase family.</text>
</comment>
<proteinExistence type="inferred from homology"/>
<gene>
    <name evidence="1" type="primary">mnmE</name>
    <name evidence="1" type="synonym">trmE</name>
    <name type="ordered locus">A1E_04855</name>
</gene>
<feature type="chain" id="PRO_1000048866" description="tRNA modification GTPase MnmE">
    <location>
        <begin position="1"/>
        <end position="445"/>
    </location>
</feature>
<feature type="domain" description="TrmE-type G">
    <location>
        <begin position="215"/>
        <end position="371"/>
    </location>
</feature>
<feature type="binding site" evidence="1">
    <location>
        <position position="20"/>
    </location>
    <ligand>
        <name>(6S)-5-formyl-5,6,7,8-tetrahydrofolate</name>
        <dbReference type="ChEBI" id="CHEBI:57457"/>
    </ligand>
</feature>
<feature type="binding site" evidence="1">
    <location>
        <position position="79"/>
    </location>
    <ligand>
        <name>(6S)-5-formyl-5,6,7,8-tetrahydrofolate</name>
        <dbReference type="ChEBI" id="CHEBI:57457"/>
    </ligand>
</feature>
<feature type="binding site" evidence="1">
    <location>
        <position position="119"/>
    </location>
    <ligand>
        <name>(6S)-5-formyl-5,6,7,8-tetrahydrofolate</name>
        <dbReference type="ChEBI" id="CHEBI:57457"/>
    </ligand>
</feature>
<feature type="binding site" evidence="1">
    <location>
        <begin position="225"/>
        <end position="230"/>
    </location>
    <ligand>
        <name>GTP</name>
        <dbReference type="ChEBI" id="CHEBI:37565"/>
    </ligand>
</feature>
<feature type="binding site" evidence="1">
    <location>
        <position position="225"/>
    </location>
    <ligand>
        <name>K(+)</name>
        <dbReference type="ChEBI" id="CHEBI:29103"/>
    </ligand>
</feature>
<feature type="binding site" evidence="1">
    <location>
        <position position="229"/>
    </location>
    <ligand>
        <name>Mg(2+)</name>
        <dbReference type="ChEBI" id="CHEBI:18420"/>
    </ligand>
</feature>
<feature type="binding site" evidence="1">
    <location>
        <begin position="244"/>
        <end position="250"/>
    </location>
    <ligand>
        <name>GTP</name>
        <dbReference type="ChEBI" id="CHEBI:37565"/>
    </ligand>
</feature>
<feature type="binding site" evidence="1">
    <location>
        <position position="244"/>
    </location>
    <ligand>
        <name>K(+)</name>
        <dbReference type="ChEBI" id="CHEBI:29103"/>
    </ligand>
</feature>
<feature type="binding site" evidence="1">
    <location>
        <position position="246"/>
    </location>
    <ligand>
        <name>K(+)</name>
        <dbReference type="ChEBI" id="CHEBI:29103"/>
    </ligand>
</feature>
<feature type="binding site" evidence="1">
    <location>
        <position position="249"/>
    </location>
    <ligand>
        <name>K(+)</name>
        <dbReference type="ChEBI" id="CHEBI:29103"/>
    </ligand>
</feature>
<feature type="binding site" evidence="1">
    <location>
        <position position="250"/>
    </location>
    <ligand>
        <name>Mg(2+)</name>
        <dbReference type="ChEBI" id="CHEBI:18420"/>
    </ligand>
</feature>
<feature type="binding site" evidence="1">
    <location>
        <begin position="269"/>
        <end position="272"/>
    </location>
    <ligand>
        <name>GTP</name>
        <dbReference type="ChEBI" id="CHEBI:37565"/>
    </ligand>
</feature>
<feature type="binding site" evidence="1">
    <location>
        <position position="445"/>
    </location>
    <ligand>
        <name>(6S)-5-formyl-5,6,7,8-tetrahydrofolate</name>
        <dbReference type="ChEBI" id="CHEBI:57457"/>
    </ligand>
</feature>
<dbReference type="EC" id="3.6.-.-" evidence="1"/>
<dbReference type="EMBL" id="CP000409">
    <property type="protein sequence ID" value="ABV73892.1"/>
    <property type="molecule type" value="Genomic_DNA"/>
</dbReference>
<dbReference type="RefSeq" id="WP_012149087.1">
    <property type="nucleotide sequence ID" value="NC_009879.1"/>
</dbReference>
<dbReference type="SMR" id="A8EZV9"/>
<dbReference type="STRING" id="293613.A1E_04855"/>
<dbReference type="KEGG" id="rcm:A1E_04855"/>
<dbReference type="eggNOG" id="COG0486">
    <property type="taxonomic scope" value="Bacteria"/>
</dbReference>
<dbReference type="HOGENOM" id="CLU_019624_3_1_5"/>
<dbReference type="Proteomes" id="UP000007056">
    <property type="component" value="Chromosome"/>
</dbReference>
<dbReference type="GO" id="GO:0005737">
    <property type="term" value="C:cytoplasm"/>
    <property type="evidence" value="ECO:0007669"/>
    <property type="project" value="UniProtKB-SubCell"/>
</dbReference>
<dbReference type="GO" id="GO:0005525">
    <property type="term" value="F:GTP binding"/>
    <property type="evidence" value="ECO:0007669"/>
    <property type="project" value="UniProtKB-UniRule"/>
</dbReference>
<dbReference type="GO" id="GO:0003924">
    <property type="term" value="F:GTPase activity"/>
    <property type="evidence" value="ECO:0007669"/>
    <property type="project" value="UniProtKB-UniRule"/>
</dbReference>
<dbReference type="GO" id="GO:0046872">
    <property type="term" value="F:metal ion binding"/>
    <property type="evidence" value="ECO:0007669"/>
    <property type="project" value="UniProtKB-KW"/>
</dbReference>
<dbReference type="GO" id="GO:0030488">
    <property type="term" value="P:tRNA methylation"/>
    <property type="evidence" value="ECO:0007669"/>
    <property type="project" value="TreeGrafter"/>
</dbReference>
<dbReference type="GO" id="GO:0002098">
    <property type="term" value="P:tRNA wobble uridine modification"/>
    <property type="evidence" value="ECO:0007669"/>
    <property type="project" value="TreeGrafter"/>
</dbReference>
<dbReference type="CDD" id="cd04164">
    <property type="entry name" value="trmE"/>
    <property type="match status" value="1"/>
</dbReference>
<dbReference type="CDD" id="cd14858">
    <property type="entry name" value="TrmE_N"/>
    <property type="match status" value="1"/>
</dbReference>
<dbReference type="FunFam" id="3.30.1360.120:FF:000007">
    <property type="entry name" value="tRNA modification GTPase GTPBP3, mitochondrial"/>
    <property type="match status" value="1"/>
</dbReference>
<dbReference type="Gene3D" id="3.40.50.300">
    <property type="entry name" value="P-loop containing nucleotide triphosphate hydrolases"/>
    <property type="match status" value="1"/>
</dbReference>
<dbReference type="Gene3D" id="3.30.1360.120">
    <property type="entry name" value="Probable tRNA modification gtpase trme, domain 1"/>
    <property type="match status" value="1"/>
</dbReference>
<dbReference type="Gene3D" id="1.20.120.430">
    <property type="entry name" value="tRNA modification GTPase MnmE domain 2"/>
    <property type="match status" value="1"/>
</dbReference>
<dbReference type="HAMAP" id="MF_00379">
    <property type="entry name" value="GTPase_MnmE"/>
    <property type="match status" value="1"/>
</dbReference>
<dbReference type="InterPro" id="IPR031168">
    <property type="entry name" value="G_TrmE"/>
</dbReference>
<dbReference type="InterPro" id="IPR006073">
    <property type="entry name" value="GTP-bd"/>
</dbReference>
<dbReference type="InterPro" id="IPR018948">
    <property type="entry name" value="GTP-bd_TrmE_N"/>
</dbReference>
<dbReference type="InterPro" id="IPR004520">
    <property type="entry name" value="GTPase_MnmE"/>
</dbReference>
<dbReference type="InterPro" id="IPR027368">
    <property type="entry name" value="MnmE_dom2"/>
</dbReference>
<dbReference type="InterPro" id="IPR025867">
    <property type="entry name" value="MnmE_helical"/>
</dbReference>
<dbReference type="InterPro" id="IPR027417">
    <property type="entry name" value="P-loop_NTPase"/>
</dbReference>
<dbReference type="InterPro" id="IPR005225">
    <property type="entry name" value="Small_GTP-bd"/>
</dbReference>
<dbReference type="InterPro" id="IPR027266">
    <property type="entry name" value="TrmE/GcvT_dom1"/>
</dbReference>
<dbReference type="NCBIfam" id="TIGR00450">
    <property type="entry name" value="mnmE_trmE_thdF"/>
    <property type="match status" value="1"/>
</dbReference>
<dbReference type="NCBIfam" id="NF003661">
    <property type="entry name" value="PRK05291.1-3"/>
    <property type="match status" value="1"/>
</dbReference>
<dbReference type="NCBIfam" id="TIGR00231">
    <property type="entry name" value="small_GTP"/>
    <property type="match status" value="1"/>
</dbReference>
<dbReference type="PANTHER" id="PTHR42714">
    <property type="entry name" value="TRNA MODIFICATION GTPASE GTPBP3"/>
    <property type="match status" value="1"/>
</dbReference>
<dbReference type="PANTHER" id="PTHR42714:SF2">
    <property type="entry name" value="TRNA MODIFICATION GTPASE GTPBP3, MITOCHONDRIAL"/>
    <property type="match status" value="1"/>
</dbReference>
<dbReference type="Pfam" id="PF01926">
    <property type="entry name" value="MMR_HSR1"/>
    <property type="match status" value="1"/>
</dbReference>
<dbReference type="Pfam" id="PF12631">
    <property type="entry name" value="MnmE_helical"/>
    <property type="match status" value="1"/>
</dbReference>
<dbReference type="Pfam" id="PF10396">
    <property type="entry name" value="TrmE_N"/>
    <property type="match status" value="1"/>
</dbReference>
<dbReference type="SUPFAM" id="SSF52540">
    <property type="entry name" value="P-loop containing nucleoside triphosphate hydrolases"/>
    <property type="match status" value="1"/>
</dbReference>
<dbReference type="SUPFAM" id="SSF116878">
    <property type="entry name" value="TrmE connector domain"/>
    <property type="match status" value="1"/>
</dbReference>
<dbReference type="PROSITE" id="PS51709">
    <property type="entry name" value="G_TRME"/>
    <property type="match status" value="1"/>
</dbReference>
<evidence type="ECO:0000255" key="1">
    <source>
        <dbReference type="HAMAP-Rule" id="MF_00379"/>
    </source>
</evidence>
<protein>
    <recommendedName>
        <fullName evidence="1">tRNA modification GTPase MnmE</fullName>
        <ecNumber evidence="1">3.6.-.-</ecNumber>
    </recommendedName>
</protein>
<organism>
    <name type="scientific">Rickettsia canadensis (strain McKiel)</name>
    <dbReference type="NCBI Taxonomy" id="293613"/>
    <lineage>
        <taxon>Bacteria</taxon>
        <taxon>Pseudomonadati</taxon>
        <taxon>Pseudomonadota</taxon>
        <taxon>Alphaproteobacteria</taxon>
        <taxon>Rickettsiales</taxon>
        <taxon>Rickettsiaceae</taxon>
        <taxon>Rickettsieae</taxon>
        <taxon>Rickettsia</taxon>
        <taxon>belli group</taxon>
    </lineage>
</organism>
<reference key="1">
    <citation type="submission" date="2007-09" db="EMBL/GenBank/DDBJ databases">
        <title>Complete genome sequence of Rickettsia canadensis.</title>
        <authorList>
            <person name="Madan A."/>
            <person name="Fahey J."/>
            <person name="Helton E."/>
            <person name="Ketteman M."/>
            <person name="Madan A."/>
            <person name="Rodrigues S."/>
            <person name="Sanchez A."/>
            <person name="Whiting M."/>
            <person name="Dasch G."/>
            <person name="Eremeeva M."/>
        </authorList>
    </citation>
    <scope>NUCLEOTIDE SEQUENCE [LARGE SCALE GENOMIC DNA]</scope>
    <source>
        <strain>McKiel</strain>
    </source>
</reference>
<sequence length="445" mass="49702">METIFAQSSAFGKAGVAVFRISGPKSLEVLQLLTGRKDFKSRLMYYQQITFPESGELIDNAMVVYFKSPGSFTGEDVAEIYTHGSKAISIMLINALLNIPNIRLAEAGEFTKRAFLNNKFDLTAAEGIADLINAETIMQHRQAIRQAGGALEELYNNWREQLLQIISLLEAYIDFPDEDIPDSILNKVNNTHTNLINEISNYLNDNRRGELLNSGLKLAIIGPPNAGKSSLLNFLMQRDIAIVSNIAGTTRDIIEGHLDIGGYPIILQDTAGIREESSDIIEQEGIKRAINSAKTADIKIIMFDAEKLDSSINEGIIDLIDENTIIIINKIDLIEPSKIFLIEDKYKCLRVSIKNNIALNDILKNIENIAENMAGFTETPYITNQRHRHYLKQGLTYLKNFTLDNDLVLATEDIRMTVRCIGTITGVINVNEILGEIFKNFCIGK</sequence>
<accession>A8EZV9</accession>
<keyword id="KW-0963">Cytoplasm</keyword>
<keyword id="KW-0342">GTP-binding</keyword>
<keyword id="KW-0378">Hydrolase</keyword>
<keyword id="KW-0460">Magnesium</keyword>
<keyword id="KW-0479">Metal-binding</keyword>
<keyword id="KW-0547">Nucleotide-binding</keyword>
<keyword id="KW-0630">Potassium</keyword>
<keyword id="KW-0819">tRNA processing</keyword>
<name>MNME_RICCK</name>